<name>RL34_PROA2</name>
<accession>B4S6X4</accession>
<evidence type="ECO:0000255" key="1">
    <source>
        <dbReference type="HAMAP-Rule" id="MF_00391"/>
    </source>
</evidence>
<evidence type="ECO:0000256" key="2">
    <source>
        <dbReference type="SAM" id="MobiDB-lite"/>
    </source>
</evidence>
<evidence type="ECO:0000305" key="3"/>
<protein>
    <recommendedName>
        <fullName evidence="1">Large ribosomal subunit protein bL34</fullName>
    </recommendedName>
    <alternativeName>
        <fullName evidence="3">50S ribosomal protein L34</fullName>
    </alternativeName>
</protein>
<feature type="chain" id="PRO_1000196089" description="Large ribosomal subunit protein bL34">
    <location>
        <begin position="1"/>
        <end position="53"/>
    </location>
</feature>
<feature type="region of interest" description="Disordered" evidence="2">
    <location>
        <begin position="1"/>
        <end position="53"/>
    </location>
</feature>
<feature type="compositionally biased region" description="Basic residues" evidence="2">
    <location>
        <begin position="1"/>
        <end position="19"/>
    </location>
</feature>
<feature type="compositionally biased region" description="Basic residues" evidence="2">
    <location>
        <begin position="26"/>
        <end position="40"/>
    </location>
</feature>
<feature type="compositionally biased region" description="Polar residues" evidence="2">
    <location>
        <begin position="42"/>
        <end position="53"/>
    </location>
</feature>
<proteinExistence type="inferred from homology"/>
<sequence>MKRTFQPHNRKRRNKHGFRARMATKNGRRILASRRAKGRHSLSVSSAMGTRKQ</sequence>
<organism>
    <name type="scientific">Prosthecochloris aestuarii (strain DSM 271 / SK 413)</name>
    <dbReference type="NCBI Taxonomy" id="290512"/>
    <lineage>
        <taxon>Bacteria</taxon>
        <taxon>Pseudomonadati</taxon>
        <taxon>Chlorobiota</taxon>
        <taxon>Chlorobiia</taxon>
        <taxon>Chlorobiales</taxon>
        <taxon>Chlorobiaceae</taxon>
        <taxon>Prosthecochloris</taxon>
    </lineage>
</organism>
<keyword id="KW-0687">Ribonucleoprotein</keyword>
<keyword id="KW-0689">Ribosomal protein</keyword>
<reference key="1">
    <citation type="submission" date="2008-06" db="EMBL/GenBank/DDBJ databases">
        <title>Complete sequence of chromosome of Prosthecochloris aestuarii DSM 271.</title>
        <authorList>
            <consortium name="US DOE Joint Genome Institute"/>
            <person name="Lucas S."/>
            <person name="Copeland A."/>
            <person name="Lapidus A."/>
            <person name="Glavina del Rio T."/>
            <person name="Dalin E."/>
            <person name="Tice H."/>
            <person name="Bruce D."/>
            <person name="Goodwin L."/>
            <person name="Pitluck S."/>
            <person name="Schmutz J."/>
            <person name="Larimer F."/>
            <person name="Land M."/>
            <person name="Hauser L."/>
            <person name="Kyrpides N."/>
            <person name="Anderson I."/>
            <person name="Liu Z."/>
            <person name="Li T."/>
            <person name="Zhao F."/>
            <person name="Overmann J."/>
            <person name="Bryant D.A."/>
            <person name="Richardson P."/>
        </authorList>
    </citation>
    <scope>NUCLEOTIDE SEQUENCE [LARGE SCALE GENOMIC DNA]</scope>
    <source>
        <strain>DSM 271 / SK 413</strain>
    </source>
</reference>
<dbReference type="EMBL" id="CP001108">
    <property type="protein sequence ID" value="ACF47329.1"/>
    <property type="molecule type" value="Genomic_DNA"/>
</dbReference>
<dbReference type="RefSeq" id="WP_012506857.1">
    <property type="nucleotide sequence ID" value="NC_011059.1"/>
</dbReference>
<dbReference type="SMR" id="B4S6X4"/>
<dbReference type="STRING" id="290512.Paes_2338"/>
<dbReference type="KEGG" id="paa:Paes_2338"/>
<dbReference type="eggNOG" id="COG0230">
    <property type="taxonomic scope" value="Bacteria"/>
</dbReference>
<dbReference type="HOGENOM" id="CLU_129938_2_0_10"/>
<dbReference type="Proteomes" id="UP000002725">
    <property type="component" value="Chromosome"/>
</dbReference>
<dbReference type="GO" id="GO:1990904">
    <property type="term" value="C:ribonucleoprotein complex"/>
    <property type="evidence" value="ECO:0007669"/>
    <property type="project" value="UniProtKB-KW"/>
</dbReference>
<dbReference type="GO" id="GO:0005840">
    <property type="term" value="C:ribosome"/>
    <property type="evidence" value="ECO:0007669"/>
    <property type="project" value="UniProtKB-KW"/>
</dbReference>
<dbReference type="GO" id="GO:0003735">
    <property type="term" value="F:structural constituent of ribosome"/>
    <property type="evidence" value="ECO:0007669"/>
    <property type="project" value="InterPro"/>
</dbReference>
<dbReference type="GO" id="GO:0006412">
    <property type="term" value="P:translation"/>
    <property type="evidence" value="ECO:0007669"/>
    <property type="project" value="UniProtKB-UniRule"/>
</dbReference>
<dbReference type="FunFam" id="1.10.287.3980:FF:000001">
    <property type="entry name" value="Mitochondrial ribosomal protein L34"/>
    <property type="match status" value="1"/>
</dbReference>
<dbReference type="Gene3D" id="1.10.287.3980">
    <property type="match status" value="1"/>
</dbReference>
<dbReference type="HAMAP" id="MF_00391">
    <property type="entry name" value="Ribosomal_bL34"/>
    <property type="match status" value="1"/>
</dbReference>
<dbReference type="InterPro" id="IPR000271">
    <property type="entry name" value="Ribosomal_bL34"/>
</dbReference>
<dbReference type="InterPro" id="IPR020939">
    <property type="entry name" value="Ribosomal_bL34_CS"/>
</dbReference>
<dbReference type="NCBIfam" id="TIGR01030">
    <property type="entry name" value="rpmH_bact"/>
    <property type="match status" value="1"/>
</dbReference>
<dbReference type="PANTHER" id="PTHR14503:SF4">
    <property type="entry name" value="LARGE RIBOSOMAL SUBUNIT PROTEIN BL34M"/>
    <property type="match status" value="1"/>
</dbReference>
<dbReference type="PANTHER" id="PTHR14503">
    <property type="entry name" value="MITOCHONDRIAL RIBOSOMAL PROTEIN 34 FAMILY MEMBER"/>
    <property type="match status" value="1"/>
</dbReference>
<dbReference type="Pfam" id="PF00468">
    <property type="entry name" value="Ribosomal_L34"/>
    <property type="match status" value="1"/>
</dbReference>
<dbReference type="PROSITE" id="PS00784">
    <property type="entry name" value="RIBOSOMAL_L34"/>
    <property type="match status" value="1"/>
</dbReference>
<gene>
    <name evidence="1" type="primary">rpmH</name>
    <name type="ordered locus">Paes_2338</name>
</gene>
<comment type="similarity">
    <text evidence="1">Belongs to the bacterial ribosomal protein bL34 family.</text>
</comment>